<evidence type="ECO:0000255" key="1">
    <source>
        <dbReference type="HAMAP-Rule" id="MF_00735"/>
    </source>
</evidence>
<organism>
    <name type="scientific">Streptococcus pneumoniae (strain ATCC 700669 / Spain 23F-1)</name>
    <dbReference type="NCBI Taxonomy" id="561276"/>
    <lineage>
        <taxon>Bacteria</taxon>
        <taxon>Bacillati</taxon>
        <taxon>Bacillota</taxon>
        <taxon>Bacilli</taxon>
        <taxon>Lactobacillales</taxon>
        <taxon>Streptococcaceae</taxon>
        <taxon>Streptococcus</taxon>
    </lineage>
</organism>
<dbReference type="EC" id="2.1.1.-" evidence="1"/>
<dbReference type="EMBL" id="FM211187">
    <property type="protein sequence ID" value="CAR69560.1"/>
    <property type="molecule type" value="Genomic_DNA"/>
</dbReference>
<dbReference type="RefSeq" id="WP_000451122.1">
    <property type="nucleotide sequence ID" value="NC_011900.1"/>
</dbReference>
<dbReference type="SMR" id="B8ZMW2"/>
<dbReference type="KEGG" id="sne:SPN23F17950"/>
<dbReference type="HOGENOM" id="CLU_049382_0_1_9"/>
<dbReference type="GO" id="GO:0005737">
    <property type="term" value="C:cytoplasm"/>
    <property type="evidence" value="ECO:0007669"/>
    <property type="project" value="UniProtKB-SubCell"/>
</dbReference>
<dbReference type="GO" id="GO:0016279">
    <property type="term" value="F:protein-lysine N-methyltransferase activity"/>
    <property type="evidence" value="ECO:0007669"/>
    <property type="project" value="RHEA"/>
</dbReference>
<dbReference type="GO" id="GO:0032259">
    <property type="term" value="P:methylation"/>
    <property type="evidence" value="ECO:0007669"/>
    <property type="project" value="UniProtKB-KW"/>
</dbReference>
<dbReference type="CDD" id="cd02440">
    <property type="entry name" value="AdoMet_MTases"/>
    <property type="match status" value="1"/>
</dbReference>
<dbReference type="Gene3D" id="3.40.50.150">
    <property type="entry name" value="Vaccinia Virus protein VP39"/>
    <property type="match status" value="1"/>
</dbReference>
<dbReference type="HAMAP" id="MF_00735">
    <property type="entry name" value="Methyltr_PrmA"/>
    <property type="match status" value="1"/>
</dbReference>
<dbReference type="InterPro" id="IPR050078">
    <property type="entry name" value="Ribosomal_L11_MeTrfase_PrmA"/>
</dbReference>
<dbReference type="InterPro" id="IPR004498">
    <property type="entry name" value="Ribosomal_PrmA_MeTrfase"/>
</dbReference>
<dbReference type="InterPro" id="IPR029063">
    <property type="entry name" value="SAM-dependent_MTases_sf"/>
</dbReference>
<dbReference type="NCBIfam" id="TIGR00406">
    <property type="entry name" value="prmA"/>
    <property type="match status" value="1"/>
</dbReference>
<dbReference type="PANTHER" id="PTHR43648">
    <property type="entry name" value="ELECTRON TRANSFER FLAVOPROTEIN BETA SUBUNIT LYSINE METHYLTRANSFERASE"/>
    <property type="match status" value="1"/>
</dbReference>
<dbReference type="PANTHER" id="PTHR43648:SF1">
    <property type="entry name" value="ELECTRON TRANSFER FLAVOPROTEIN BETA SUBUNIT LYSINE METHYLTRANSFERASE"/>
    <property type="match status" value="1"/>
</dbReference>
<dbReference type="Pfam" id="PF06325">
    <property type="entry name" value="PrmA"/>
    <property type="match status" value="1"/>
</dbReference>
<dbReference type="PIRSF" id="PIRSF000401">
    <property type="entry name" value="RPL11_MTase"/>
    <property type="match status" value="1"/>
</dbReference>
<dbReference type="SUPFAM" id="SSF53335">
    <property type="entry name" value="S-adenosyl-L-methionine-dependent methyltransferases"/>
    <property type="match status" value="1"/>
</dbReference>
<protein>
    <recommendedName>
        <fullName evidence="1">Ribosomal protein L11 methyltransferase</fullName>
        <shortName evidence="1">L11 Mtase</shortName>
        <ecNumber evidence="1">2.1.1.-</ecNumber>
    </recommendedName>
</protein>
<feature type="chain" id="PRO_1000148142" description="Ribosomal protein L11 methyltransferase">
    <location>
        <begin position="1"/>
        <end position="316"/>
    </location>
</feature>
<feature type="binding site" evidence="1">
    <location>
        <position position="157"/>
    </location>
    <ligand>
        <name>S-adenosyl-L-methionine</name>
        <dbReference type="ChEBI" id="CHEBI:59789"/>
    </ligand>
</feature>
<feature type="binding site" evidence="1">
    <location>
        <position position="178"/>
    </location>
    <ligand>
        <name>S-adenosyl-L-methionine</name>
        <dbReference type="ChEBI" id="CHEBI:59789"/>
    </ligand>
</feature>
<feature type="binding site" evidence="1">
    <location>
        <position position="200"/>
    </location>
    <ligand>
        <name>S-adenosyl-L-methionine</name>
        <dbReference type="ChEBI" id="CHEBI:59789"/>
    </ligand>
</feature>
<feature type="binding site" evidence="1">
    <location>
        <position position="243"/>
    </location>
    <ligand>
        <name>S-adenosyl-L-methionine</name>
        <dbReference type="ChEBI" id="CHEBI:59789"/>
    </ligand>
</feature>
<sequence length="316" mass="34747">METWQELKVTVKREGEELVSNLLIELGAQGVAIEDSLDYVGNVDRFGEIFPEVEQQEEIVVTAYYPDTVDVTVVEADLQARLAELTDFMDLGELKIGTTALAEEDWADNWKKYYEPARITHDLTIVPSWTDYEATAGEKIIKLDPGMAFGTGTHPTTKMSLFALEQVLRGGETVLDVGTGSGVLSIASSLLGAKEIFAYDLDDVAVRVAQENIELNPGMENIHVAAGDLLKGVEIEADVIVANILADILIHLIDDAYRLVKDEGYLIMSGIIKDKWDMVRESAESAGFFLETHMIQGEWNACVFKKTKDISGVIGG</sequence>
<name>PRMA_STRPJ</name>
<comment type="function">
    <text evidence="1">Methylates ribosomal protein L11.</text>
</comment>
<comment type="catalytic activity">
    <reaction evidence="1">
        <text>L-lysyl-[protein] + 3 S-adenosyl-L-methionine = N(6),N(6),N(6)-trimethyl-L-lysyl-[protein] + 3 S-adenosyl-L-homocysteine + 3 H(+)</text>
        <dbReference type="Rhea" id="RHEA:54192"/>
        <dbReference type="Rhea" id="RHEA-COMP:9752"/>
        <dbReference type="Rhea" id="RHEA-COMP:13826"/>
        <dbReference type="ChEBI" id="CHEBI:15378"/>
        <dbReference type="ChEBI" id="CHEBI:29969"/>
        <dbReference type="ChEBI" id="CHEBI:57856"/>
        <dbReference type="ChEBI" id="CHEBI:59789"/>
        <dbReference type="ChEBI" id="CHEBI:61961"/>
    </reaction>
</comment>
<comment type="subcellular location">
    <subcellularLocation>
        <location evidence="1">Cytoplasm</location>
    </subcellularLocation>
</comment>
<comment type="similarity">
    <text evidence="1">Belongs to the methyltransferase superfamily. PrmA family.</text>
</comment>
<gene>
    <name evidence="1" type="primary">prmA</name>
    <name type="ordered locus">SPN23F17950</name>
</gene>
<accession>B8ZMW2</accession>
<reference key="1">
    <citation type="journal article" date="2009" name="J. Bacteriol.">
        <title>Role of conjugative elements in the evolution of the multidrug-resistant pandemic clone Streptococcus pneumoniae Spain23F ST81.</title>
        <authorList>
            <person name="Croucher N.J."/>
            <person name="Walker D."/>
            <person name="Romero P."/>
            <person name="Lennard N."/>
            <person name="Paterson G.K."/>
            <person name="Bason N.C."/>
            <person name="Mitchell A.M."/>
            <person name="Quail M.A."/>
            <person name="Andrew P.W."/>
            <person name="Parkhill J."/>
            <person name="Bentley S.D."/>
            <person name="Mitchell T.J."/>
        </authorList>
    </citation>
    <scope>NUCLEOTIDE SEQUENCE [LARGE SCALE GENOMIC DNA]</scope>
    <source>
        <strain>ATCC 700669 / Spain 23F-1</strain>
    </source>
</reference>
<keyword id="KW-0963">Cytoplasm</keyword>
<keyword id="KW-0489">Methyltransferase</keyword>
<keyword id="KW-0949">S-adenosyl-L-methionine</keyword>
<keyword id="KW-0808">Transferase</keyword>
<proteinExistence type="inferred from homology"/>